<keyword id="KW-0903">Direct protein sequencing</keyword>
<keyword id="KW-1015">Disulfide bond</keyword>
<keyword id="KW-0872">Ion channel impairing toxin</keyword>
<keyword id="KW-0960">Knottin</keyword>
<keyword id="KW-0964">Secreted</keyword>
<keyword id="KW-0732">Signal</keyword>
<keyword id="KW-0800">Toxin</keyword>
<organism>
    <name type="scientific">Cyriopagopus hainanus</name>
    <name type="common">Chinese bird spider</name>
    <name type="synonym">Haplopelma hainanum</name>
    <dbReference type="NCBI Taxonomy" id="209901"/>
    <lineage>
        <taxon>Eukaryota</taxon>
        <taxon>Metazoa</taxon>
        <taxon>Ecdysozoa</taxon>
        <taxon>Arthropoda</taxon>
        <taxon>Chelicerata</taxon>
        <taxon>Arachnida</taxon>
        <taxon>Araneae</taxon>
        <taxon>Mygalomorphae</taxon>
        <taxon>Theraphosidae</taxon>
        <taxon>Haplopelma</taxon>
    </lineage>
</organism>
<feature type="signal peptide" evidence="2">
    <location>
        <begin position="1"/>
        <end position="21"/>
    </location>
</feature>
<feature type="propeptide" id="PRO_0000400659" evidence="3">
    <location>
        <begin position="22"/>
        <end position="50"/>
    </location>
</feature>
<feature type="peptide" id="PRO_0000400660" description="Omega-theraphotoxin-Hhn1a 2">
    <location>
        <begin position="51"/>
        <end position="86"/>
    </location>
</feature>
<feature type="disulfide bond" evidence="1">
    <location>
        <begin position="52"/>
        <end position="66"/>
    </location>
</feature>
<feature type="disulfide bond" evidence="1">
    <location>
        <begin position="59"/>
        <end position="71"/>
    </location>
</feature>
<feature type="disulfide bond" evidence="1">
    <location>
        <begin position="65"/>
        <end position="78"/>
    </location>
</feature>
<name>H9B02_CYRHA</name>
<proteinExistence type="evidence at protein level"/>
<reference key="1">
    <citation type="journal article" date="2010" name="J. Proteome Res.">
        <title>Molecular diversification of peptide toxins from the tarantula Haplopelma hainanum (Ornithoctonus hainana) venom based on transcriptomic, peptidomic, and genomic analyses.</title>
        <authorList>
            <person name="Tang X."/>
            <person name="Zhang Y."/>
            <person name="Hu W."/>
            <person name="Xu D."/>
            <person name="Tao H."/>
            <person name="Yang X."/>
            <person name="Li Y."/>
            <person name="Jiang L."/>
            <person name="Liang S."/>
        </authorList>
    </citation>
    <scope>NUCLEOTIDE SEQUENCE [LARGE SCALE MRNA]</scope>
    <scope>PROTEIN SEQUENCE OF 51-85</scope>
    <scope>IDENTIFICATION BY MASS SPECTROMETRY</scope>
    <source>
        <tissue>Venom</tissue>
        <tissue>Venom gland</tissue>
    </source>
</reference>
<dbReference type="EMBL" id="GU292916">
    <property type="protein sequence ID" value="ADB56732.1"/>
    <property type="molecule type" value="mRNA"/>
</dbReference>
<dbReference type="SMR" id="D2Y239"/>
<dbReference type="ArachnoServer" id="AS001912">
    <property type="toxin name" value="omega-theraphotoxin-Hhn1a"/>
</dbReference>
<dbReference type="GO" id="GO:0005576">
    <property type="term" value="C:extracellular region"/>
    <property type="evidence" value="ECO:0007669"/>
    <property type="project" value="UniProtKB-SubCell"/>
</dbReference>
<dbReference type="GO" id="GO:0008200">
    <property type="term" value="F:ion channel inhibitor activity"/>
    <property type="evidence" value="ECO:0007669"/>
    <property type="project" value="InterPro"/>
</dbReference>
<dbReference type="GO" id="GO:0090729">
    <property type="term" value="F:toxin activity"/>
    <property type="evidence" value="ECO:0007669"/>
    <property type="project" value="UniProtKB-KW"/>
</dbReference>
<dbReference type="InterPro" id="IPR011696">
    <property type="entry name" value="Huwentoxin-1"/>
</dbReference>
<dbReference type="InterPro" id="IPR013140">
    <property type="entry name" value="Huwentoxin_CS1"/>
</dbReference>
<dbReference type="Pfam" id="PF07740">
    <property type="entry name" value="Toxin_12"/>
    <property type="match status" value="1"/>
</dbReference>
<dbReference type="SUPFAM" id="SSF57059">
    <property type="entry name" value="omega toxin-like"/>
    <property type="match status" value="1"/>
</dbReference>
<dbReference type="PROSITE" id="PS60021">
    <property type="entry name" value="HWTX_1"/>
    <property type="match status" value="1"/>
</dbReference>
<evidence type="ECO:0000250" key="1"/>
<evidence type="ECO:0000255" key="2"/>
<evidence type="ECO:0000269" key="3">
    <source>
    </source>
</evidence>
<evidence type="ECO:0000305" key="4"/>
<protein>
    <recommendedName>
        <fullName>Omega-theraphotoxin-Hhn1a 2</fullName>
        <shortName>Omega-TRTX-Hhn1a</shortName>
    </recommendedName>
    <alternativeName>
        <fullName>Hainantoxin-IX-2.2</fullName>
        <shortName>HNTX-IX-2.2</shortName>
    </alternativeName>
    <alternativeName>
        <fullName>Peptide F1-30.82</fullName>
    </alternativeName>
</protein>
<comment type="function">
    <text evidence="1">Ion channel inhibitor.</text>
</comment>
<comment type="subcellular location">
    <subcellularLocation>
        <location>Secreted</location>
    </subcellularLocation>
</comment>
<comment type="tissue specificity">
    <text>Expressed by the venom gland.</text>
</comment>
<comment type="domain">
    <text evidence="1">The presence of a 'disulfide through disulfide knot' structurally defines this protein as a knottin.</text>
</comment>
<comment type="similarity">
    <text evidence="4">Belongs to the neurotoxin 10 (Hwtx-1) family. 17 (Hntx-9) subfamily.</text>
</comment>
<accession>D2Y239</accession>
<sequence>MKSIVFVALLGLALLAVVCSASEDAHKELLKEVVRAMVVDKTDAVQAEERECRWYLGGCSQDGDCCKHLQCHSNYEWCVWDGTFSK</sequence>